<comment type="function">
    <text evidence="1">Involved in transcription antitermination. Required for transcription of ribosomal RNA (rRNA) genes. Binds specifically to the boxA antiterminator sequence of the ribosomal RNA (rrn) operons.</text>
</comment>
<comment type="similarity">
    <text evidence="1">Belongs to the NusB family.</text>
</comment>
<keyword id="KW-1185">Reference proteome</keyword>
<keyword id="KW-0694">RNA-binding</keyword>
<keyword id="KW-0804">Transcription</keyword>
<keyword id="KW-0889">Transcription antitermination</keyword>
<keyword id="KW-0805">Transcription regulation</keyword>
<protein>
    <recommendedName>
        <fullName evidence="1">Transcription antitermination protein NusB</fullName>
    </recommendedName>
    <alternativeName>
        <fullName evidence="1">Antitermination factor NusB</fullName>
    </alternativeName>
</protein>
<accession>Q81M49</accession>
<accession>Q6HTK2</accession>
<accession>Q6KMU2</accession>
<name>NUSB_BACAN</name>
<dbReference type="EMBL" id="AE016879">
    <property type="protein sequence ID" value="AAP28120.1"/>
    <property type="molecule type" value="Genomic_DNA"/>
</dbReference>
<dbReference type="EMBL" id="AE017334">
    <property type="protein sequence ID" value="AAT33524.1"/>
    <property type="molecule type" value="Genomic_DNA"/>
</dbReference>
<dbReference type="EMBL" id="AE017225">
    <property type="protein sequence ID" value="AAT56387.1"/>
    <property type="molecule type" value="Genomic_DNA"/>
</dbReference>
<dbReference type="RefSeq" id="NP_846634.1">
    <property type="nucleotide sequence ID" value="NC_003997.3"/>
</dbReference>
<dbReference type="RefSeq" id="WP_000830249.1">
    <property type="nucleotide sequence ID" value="NZ_WXXJ01000027.1"/>
</dbReference>
<dbReference type="RefSeq" id="YP_030336.1">
    <property type="nucleotide sequence ID" value="NC_005945.1"/>
</dbReference>
<dbReference type="SMR" id="Q81M49"/>
<dbReference type="STRING" id="261594.GBAA_4406"/>
<dbReference type="DNASU" id="1087738"/>
<dbReference type="GeneID" id="93006920"/>
<dbReference type="KEGG" id="ban:BA_4406"/>
<dbReference type="KEGG" id="bar:GBAA_4406"/>
<dbReference type="KEGG" id="bat:BAS4086"/>
<dbReference type="PATRIC" id="fig|198094.11.peg.4374"/>
<dbReference type="eggNOG" id="COG0781">
    <property type="taxonomic scope" value="Bacteria"/>
</dbReference>
<dbReference type="HOGENOM" id="CLU_087843_3_3_9"/>
<dbReference type="OMA" id="DRMPVVD"/>
<dbReference type="OrthoDB" id="9811381at2"/>
<dbReference type="Proteomes" id="UP000000427">
    <property type="component" value="Chromosome"/>
</dbReference>
<dbReference type="Proteomes" id="UP000000594">
    <property type="component" value="Chromosome"/>
</dbReference>
<dbReference type="GO" id="GO:0005829">
    <property type="term" value="C:cytosol"/>
    <property type="evidence" value="ECO:0007669"/>
    <property type="project" value="TreeGrafter"/>
</dbReference>
<dbReference type="GO" id="GO:0003723">
    <property type="term" value="F:RNA binding"/>
    <property type="evidence" value="ECO:0007669"/>
    <property type="project" value="UniProtKB-UniRule"/>
</dbReference>
<dbReference type="GO" id="GO:0006353">
    <property type="term" value="P:DNA-templated transcription termination"/>
    <property type="evidence" value="ECO:0007669"/>
    <property type="project" value="UniProtKB-UniRule"/>
</dbReference>
<dbReference type="GO" id="GO:0031564">
    <property type="term" value="P:transcription antitermination"/>
    <property type="evidence" value="ECO:0007669"/>
    <property type="project" value="UniProtKB-KW"/>
</dbReference>
<dbReference type="CDD" id="cd00619">
    <property type="entry name" value="Terminator_NusB"/>
    <property type="match status" value="1"/>
</dbReference>
<dbReference type="FunFam" id="1.10.940.10:FF:000003">
    <property type="entry name" value="Transcription antitermination factor NusB"/>
    <property type="match status" value="1"/>
</dbReference>
<dbReference type="Gene3D" id="1.10.940.10">
    <property type="entry name" value="NusB-like"/>
    <property type="match status" value="1"/>
</dbReference>
<dbReference type="HAMAP" id="MF_00073">
    <property type="entry name" value="NusB"/>
    <property type="match status" value="1"/>
</dbReference>
<dbReference type="InterPro" id="IPR035926">
    <property type="entry name" value="NusB-like_sf"/>
</dbReference>
<dbReference type="InterPro" id="IPR011605">
    <property type="entry name" value="NusB_fam"/>
</dbReference>
<dbReference type="InterPro" id="IPR006027">
    <property type="entry name" value="NusB_RsmB_TIM44"/>
</dbReference>
<dbReference type="NCBIfam" id="TIGR01951">
    <property type="entry name" value="nusB"/>
    <property type="match status" value="1"/>
</dbReference>
<dbReference type="NCBIfam" id="NF001223">
    <property type="entry name" value="PRK00202.1-1"/>
    <property type="match status" value="1"/>
</dbReference>
<dbReference type="PANTHER" id="PTHR11078:SF3">
    <property type="entry name" value="ANTITERMINATION NUSB DOMAIN-CONTAINING PROTEIN"/>
    <property type="match status" value="1"/>
</dbReference>
<dbReference type="PANTHER" id="PTHR11078">
    <property type="entry name" value="N UTILIZATION SUBSTANCE PROTEIN B-RELATED"/>
    <property type="match status" value="1"/>
</dbReference>
<dbReference type="Pfam" id="PF01029">
    <property type="entry name" value="NusB"/>
    <property type="match status" value="1"/>
</dbReference>
<dbReference type="SUPFAM" id="SSF48013">
    <property type="entry name" value="NusB-like"/>
    <property type="match status" value="1"/>
</dbReference>
<organism>
    <name type="scientific">Bacillus anthracis</name>
    <dbReference type="NCBI Taxonomy" id="1392"/>
    <lineage>
        <taxon>Bacteria</taxon>
        <taxon>Bacillati</taxon>
        <taxon>Bacillota</taxon>
        <taxon>Bacilli</taxon>
        <taxon>Bacillales</taxon>
        <taxon>Bacillaceae</taxon>
        <taxon>Bacillus</taxon>
        <taxon>Bacillus cereus group</taxon>
    </lineage>
</organism>
<proteinExistence type="inferred from homology"/>
<sequence>MKRRTARERAMQALYQMDITGELEPKVAVENTLDEGEETNEFLESLVVGFVENKEVIDEAIRQNLKKWKLERISIVDRSILRVAVYEMKYMEEIPHNVTINEAIEIAKTFGDEESRRFINGVLSNIKDTL</sequence>
<gene>
    <name evidence="1" type="primary">nusB</name>
    <name type="ordered locus">BA_4406</name>
    <name type="ordered locus">GBAA_4406</name>
    <name type="ordered locus">BAS4086</name>
</gene>
<feature type="chain" id="PRO_0000176505" description="Transcription antitermination protein NusB">
    <location>
        <begin position="1"/>
        <end position="130"/>
    </location>
</feature>
<reference key="1">
    <citation type="journal article" date="2003" name="Nature">
        <title>The genome sequence of Bacillus anthracis Ames and comparison to closely related bacteria.</title>
        <authorList>
            <person name="Read T.D."/>
            <person name="Peterson S.N."/>
            <person name="Tourasse N.J."/>
            <person name="Baillie L.W."/>
            <person name="Paulsen I.T."/>
            <person name="Nelson K.E."/>
            <person name="Tettelin H."/>
            <person name="Fouts D.E."/>
            <person name="Eisen J.A."/>
            <person name="Gill S.R."/>
            <person name="Holtzapple E.K."/>
            <person name="Okstad O.A."/>
            <person name="Helgason E."/>
            <person name="Rilstone J."/>
            <person name="Wu M."/>
            <person name="Kolonay J.F."/>
            <person name="Beanan M.J."/>
            <person name="Dodson R.J."/>
            <person name="Brinkac L.M."/>
            <person name="Gwinn M.L."/>
            <person name="DeBoy R.T."/>
            <person name="Madpu R."/>
            <person name="Daugherty S.C."/>
            <person name="Durkin A.S."/>
            <person name="Haft D.H."/>
            <person name="Nelson W.C."/>
            <person name="Peterson J.D."/>
            <person name="Pop M."/>
            <person name="Khouri H.M."/>
            <person name="Radune D."/>
            <person name="Benton J.L."/>
            <person name="Mahamoud Y."/>
            <person name="Jiang L."/>
            <person name="Hance I.R."/>
            <person name="Weidman J.F."/>
            <person name="Berry K.J."/>
            <person name="Plaut R.D."/>
            <person name="Wolf A.M."/>
            <person name="Watkins K.L."/>
            <person name="Nierman W.C."/>
            <person name="Hazen A."/>
            <person name="Cline R.T."/>
            <person name="Redmond C."/>
            <person name="Thwaite J.E."/>
            <person name="White O."/>
            <person name="Salzberg S.L."/>
            <person name="Thomason B."/>
            <person name="Friedlander A.M."/>
            <person name="Koehler T.M."/>
            <person name="Hanna P.C."/>
            <person name="Kolstoe A.-B."/>
            <person name="Fraser C.M."/>
        </authorList>
    </citation>
    <scope>NUCLEOTIDE SEQUENCE [LARGE SCALE GENOMIC DNA]</scope>
    <source>
        <strain>Ames / isolate Porton</strain>
    </source>
</reference>
<reference key="2">
    <citation type="journal article" date="2009" name="J. Bacteriol.">
        <title>The complete genome sequence of Bacillus anthracis Ames 'Ancestor'.</title>
        <authorList>
            <person name="Ravel J."/>
            <person name="Jiang L."/>
            <person name="Stanley S.T."/>
            <person name="Wilson M.R."/>
            <person name="Decker R.S."/>
            <person name="Read T.D."/>
            <person name="Worsham P."/>
            <person name="Keim P.S."/>
            <person name="Salzberg S.L."/>
            <person name="Fraser-Liggett C.M."/>
            <person name="Rasko D.A."/>
        </authorList>
    </citation>
    <scope>NUCLEOTIDE SEQUENCE [LARGE SCALE GENOMIC DNA]</scope>
    <source>
        <strain>Ames ancestor</strain>
    </source>
</reference>
<reference key="3">
    <citation type="submission" date="2004-01" db="EMBL/GenBank/DDBJ databases">
        <title>Complete genome sequence of Bacillus anthracis Sterne.</title>
        <authorList>
            <person name="Brettin T.S."/>
            <person name="Bruce D."/>
            <person name="Challacombe J.F."/>
            <person name="Gilna P."/>
            <person name="Han C."/>
            <person name="Hill K."/>
            <person name="Hitchcock P."/>
            <person name="Jackson P."/>
            <person name="Keim P."/>
            <person name="Longmire J."/>
            <person name="Lucas S."/>
            <person name="Okinaka R."/>
            <person name="Richardson P."/>
            <person name="Rubin E."/>
            <person name="Tice H."/>
        </authorList>
    </citation>
    <scope>NUCLEOTIDE SEQUENCE [LARGE SCALE GENOMIC DNA]</scope>
    <source>
        <strain>Sterne</strain>
    </source>
</reference>
<evidence type="ECO:0000255" key="1">
    <source>
        <dbReference type="HAMAP-Rule" id="MF_00073"/>
    </source>
</evidence>